<keyword id="KW-0007">Acetylation</keyword>
<keyword id="KW-0010">Activator</keyword>
<keyword id="KW-0130">Cell adhesion</keyword>
<keyword id="KW-0965">Cell junction</keyword>
<keyword id="KW-1003">Cell membrane</keyword>
<keyword id="KW-0966">Cell projection</keyword>
<keyword id="KW-0963">Cytoplasm</keyword>
<keyword id="KW-0440">LIM domain</keyword>
<keyword id="KW-0472">Membrane</keyword>
<keyword id="KW-0479">Metal-binding</keyword>
<keyword id="KW-0539">Nucleus</keyword>
<keyword id="KW-0597">Phosphoprotein</keyword>
<keyword id="KW-1185">Reference proteome</keyword>
<keyword id="KW-0677">Repeat</keyword>
<keyword id="KW-0804">Transcription</keyword>
<keyword id="KW-0805">Transcription regulation</keyword>
<keyword id="KW-0862">Zinc</keyword>
<organism>
    <name type="scientific">Mus musculus</name>
    <name type="common">Mouse</name>
    <dbReference type="NCBI Taxonomy" id="10090"/>
    <lineage>
        <taxon>Eukaryota</taxon>
        <taxon>Metazoa</taxon>
        <taxon>Chordata</taxon>
        <taxon>Craniata</taxon>
        <taxon>Vertebrata</taxon>
        <taxon>Euteleostomi</taxon>
        <taxon>Mammalia</taxon>
        <taxon>Eutheria</taxon>
        <taxon>Euarchontoglires</taxon>
        <taxon>Glires</taxon>
        <taxon>Rodentia</taxon>
        <taxon>Myomorpha</taxon>
        <taxon>Muroidea</taxon>
        <taxon>Muridae</taxon>
        <taxon>Murinae</taxon>
        <taxon>Mus</taxon>
        <taxon>Mus</taxon>
    </lineage>
</organism>
<evidence type="ECO:0000250" key="1"/>
<evidence type="ECO:0000250" key="2">
    <source>
        <dbReference type="UniProtKB" id="O60711"/>
    </source>
</evidence>
<evidence type="ECO:0000255" key="3">
    <source>
        <dbReference type="PROSITE-ProRule" id="PRU00125"/>
    </source>
</evidence>
<evidence type="ECO:0000256" key="4">
    <source>
        <dbReference type="SAM" id="MobiDB-lite"/>
    </source>
</evidence>
<evidence type="ECO:0000269" key="5">
    <source>
    </source>
</evidence>
<evidence type="ECO:0000269" key="6">
    <source>
    </source>
</evidence>
<evidence type="ECO:0000269" key="7">
    <source>
    </source>
</evidence>
<evidence type="ECO:0000269" key="8">
    <source>
    </source>
</evidence>
<evidence type="ECO:0000269" key="9">
    <source>
    </source>
</evidence>
<evidence type="ECO:0000305" key="10"/>
<evidence type="ECO:0007744" key="11">
    <source>
    </source>
</evidence>
<evidence type="ECO:0007744" key="12">
    <source>
    </source>
</evidence>
<feature type="chain" id="PRO_0000075837" description="Leupaxin">
    <location>
        <begin position="1"/>
        <end position="386"/>
    </location>
</feature>
<feature type="domain" description="LIM zinc-binding 1" evidence="3">
    <location>
        <begin position="150"/>
        <end position="208"/>
    </location>
</feature>
<feature type="domain" description="LIM zinc-binding 2" evidence="3">
    <location>
        <begin position="209"/>
        <end position="267"/>
    </location>
</feature>
<feature type="domain" description="LIM zinc-binding 3" evidence="3">
    <location>
        <begin position="268"/>
        <end position="326"/>
    </location>
</feature>
<feature type="domain" description="LIM zinc-binding 4" evidence="3">
    <location>
        <begin position="327"/>
        <end position="386"/>
    </location>
</feature>
<feature type="region of interest" description="Disordered" evidence="4">
    <location>
        <begin position="19"/>
        <end position="52"/>
    </location>
</feature>
<feature type="short sequence motif" description="LD motif 1">
    <location>
        <begin position="3"/>
        <end position="15"/>
    </location>
</feature>
<feature type="short sequence motif" description="LD motif 2">
    <location>
        <begin position="70"/>
        <end position="82"/>
    </location>
</feature>
<feature type="short sequence motif" description="LD motif 3">
    <location>
        <begin position="92"/>
        <end position="103"/>
    </location>
</feature>
<feature type="compositionally biased region" description="Polar residues" evidence="4">
    <location>
        <begin position="22"/>
        <end position="52"/>
    </location>
</feature>
<feature type="modified residue" description="N-acetylmethionine" evidence="2">
    <location>
        <position position="1"/>
    </location>
</feature>
<feature type="modified residue" description="Phosphoserine" evidence="2">
    <location>
        <position position="19"/>
    </location>
</feature>
<feature type="modified residue" description="Phosphotyrosine" evidence="11">
    <location>
        <position position="22"/>
    </location>
</feature>
<feature type="modified residue" description="Phosphoserine" evidence="12">
    <location>
        <position position="54"/>
    </location>
</feature>
<feature type="modified residue" description="Phosphotyrosine" evidence="11">
    <location>
        <position position="62"/>
    </location>
</feature>
<feature type="modified residue" description="Phosphotyrosine; by LYN" evidence="7 11">
    <location>
        <position position="72"/>
    </location>
</feature>
<feature type="modified residue" description="Phosphoserine" evidence="2">
    <location>
        <position position="81"/>
    </location>
</feature>
<accession>Q99N69</accession>
<reference key="1">
    <citation type="submission" date="2001-01" db="EMBL/GenBank/DDBJ databases">
        <title>The noncatalytic domain of protein-tyrosine phosphatase-PEST forms a complex with leupaxin that is a novel LIM domain protein.</title>
        <authorList>
            <person name="Ishizuka H."/>
            <person name="Amano N."/>
            <person name="Watanabe N."/>
            <person name="Mashima K."/>
        </authorList>
    </citation>
    <scope>NUCLEOTIDE SEQUENCE [MRNA]</scope>
    <source>
        <tissue>Spleen</tissue>
    </source>
</reference>
<reference key="2">
    <citation type="journal article" date="2010" name="Cancer Sci.">
        <title>LIM domain-containing adaptor, leupaxin, localizes in focal adhesion and suppresses the integrin-induced tyrosine phosphorylation of paxillin.</title>
        <authorList>
            <person name="Tanaka T."/>
            <person name="Moriwaki K."/>
            <person name="Murata S."/>
            <person name="Miyasaka M."/>
        </authorList>
    </citation>
    <scope>NUCLEOTIDE SEQUENCE [MRNA]</scope>
    <scope>FUNCTION</scope>
    <scope>SUBCELLULAR LOCATION</scope>
    <scope>INTERACTION WITH PTK2/FAK</scope>
    <scope>DOMAIN LIM-3</scope>
    <source>
        <tissue>Spleen</tissue>
    </source>
</reference>
<reference key="3">
    <citation type="journal article" date="2003" name="J. Bone Miner. Res.">
        <title>Leupaxin is a critical adaptor protein in the adhesion zone of the osteoclast.</title>
        <authorList>
            <person name="Gupta A."/>
            <person name="Lee B.S."/>
            <person name="Khadeer M.A."/>
            <person name="Tang Z."/>
            <person name="Chellaiah M."/>
            <person name="Abu-Amer Y."/>
            <person name="Goldknopf J."/>
            <person name="Hruska K.A."/>
        </authorList>
    </citation>
    <scope>FUNCTION</scope>
    <scope>SUBCELLULAR LOCATION</scope>
    <scope>TISSUE SPECIFICITY</scope>
    <scope>INTERACTION WITH PTK2/FAK; PTPN12 AND PTK2B/PYK2</scope>
    <scope>PHOSPHORYLATION</scope>
</reference>
<reference key="4">
    <citation type="journal article" date="2005" name="Mol. Cell. Biochem.">
        <title>Leupaxin binds to PEST domain tyrosine phosphatase PEP.</title>
        <authorList>
            <person name="Watanabe N."/>
            <person name="Amano N."/>
            <person name="Ishizuka H."/>
            <person name="Mashima K."/>
        </authorList>
    </citation>
    <scope>INTERACTION WITH PTPN22 AND PTPN12</scope>
</reference>
<reference key="5">
    <citation type="journal article" date="2007" name="J. Biol. Chem.">
        <title>Leupaxin negatively regulates B cell receptor signaling.</title>
        <authorList>
            <person name="Chew V."/>
            <person name="Lam K.P."/>
        </authorList>
    </citation>
    <scope>FUNCTION</scope>
    <scope>PHOSPHORYLATION AT TYR-72 BY LYN</scope>
    <scope>INTERACTION WITH LYN</scope>
</reference>
<reference key="6">
    <citation type="journal article" date="2007" name="J. Immunol.">
        <title>Quantitative time-resolved phosphoproteomic analysis of mast cell signaling.</title>
        <authorList>
            <person name="Cao L."/>
            <person name="Yu K."/>
            <person name="Banh C."/>
            <person name="Nguyen V."/>
            <person name="Ritz A."/>
            <person name="Raphael B.J."/>
            <person name="Kawakami Y."/>
            <person name="Kawakami T."/>
            <person name="Salomon A.R."/>
        </authorList>
    </citation>
    <scope>PHOSPHORYLATION [LARGE SCALE ANALYSIS] AT TYR-22; TYR-62 AND TYR-72</scope>
    <scope>IDENTIFICATION BY MASS SPECTROMETRY [LARGE SCALE ANALYSIS]</scope>
    <source>
        <tissue>Mast cell</tissue>
    </source>
</reference>
<reference key="7">
    <citation type="journal article" date="2008" name="Circ. Res.">
        <title>The LIM protein leupaxin is enriched in smooth muscle and functions as an serum response factor cofactor to induce smooth muscle cell gene transcription.</title>
        <authorList>
            <person name="Sundberg-Smith L.J."/>
            <person name="DiMichele L.A."/>
            <person name="Sayers R.L."/>
            <person name="Mack C.P."/>
            <person name="Taylor J.M."/>
        </authorList>
    </citation>
    <scope>FUNCTION</scope>
    <scope>SUBCELLULAR LOCATION</scope>
    <scope>TISSUE SPECIFICITY</scope>
</reference>
<reference key="8">
    <citation type="journal article" date="2009" name="Immunity">
        <title>The phagosomal proteome in interferon-gamma-activated macrophages.</title>
        <authorList>
            <person name="Trost M."/>
            <person name="English L."/>
            <person name="Lemieux S."/>
            <person name="Courcelles M."/>
            <person name="Desjardins M."/>
            <person name="Thibault P."/>
        </authorList>
    </citation>
    <scope>PHOSPHORYLATION [LARGE SCALE ANALYSIS] AT SER-54</scope>
    <scope>IDENTIFICATION BY MASS SPECTROMETRY [LARGE SCALE ANALYSIS]</scope>
</reference>
<reference key="9">
    <citation type="journal article" date="2010" name="Cell">
        <title>A tissue-specific atlas of mouse protein phosphorylation and expression.</title>
        <authorList>
            <person name="Huttlin E.L."/>
            <person name="Jedrychowski M.P."/>
            <person name="Elias J.E."/>
            <person name="Goswami T."/>
            <person name="Rad R."/>
            <person name="Beausoleil S.A."/>
            <person name="Villen J."/>
            <person name="Haas W."/>
            <person name="Sowa M.E."/>
            <person name="Gygi S.P."/>
        </authorList>
    </citation>
    <scope>IDENTIFICATION BY MASS SPECTROMETRY [LARGE SCALE ANALYSIS]</scope>
    <source>
        <tissue>Lung</tissue>
        <tissue>Spleen</tissue>
    </source>
</reference>
<protein>
    <recommendedName>
        <fullName>Leupaxin</fullName>
    </recommendedName>
</protein>
<comment type="function">
    <text evidence="5 7 8 9">Transcriptional coactivator for androgen receptor (AR) and serum response factor (SRF). Contributes to the regulation of cell adhesion, spreading and cell migration and acts as a negative regulator in integrin-mediated cell adhesion events. Suppresses the integrin-induced tyrosine phosphorylation of paxillin (PXN). May play a critical role as an adapter protein in the formation of the adhesion zone in osteoclasts. Negatively regulates B-cell antigen receptor (BCR) signaling.</text>
</comment>
<comment type="subunit">
    <text evidence="1 5 6 7 9">Interacts with unphosphorylated ITGA4. Interacts with AR and SRF (By similarity). Interacts with PTK2B/PYK2, PTPN22 and PTPN12. Interacts (via LD motif 3) with LYN and the interaction is induced upon B-cell antigen receptor (BCR) activation. Interacts (via LD motif 3) with PTK2/FAK.</text>
</comment>
<comment type="subcellular location">
    <subcellularLocation>
        <location evidence="1">Cytoplasm</location>
    </subcellularLocation>
    <subcellularLocation>
        <location>Cell junction</location>
        <location>Focal adhesion</location>
    </subcellularLocation>
    <subcellularLocation>
        <location>Nucleus</location>
    </subcellularLocation>
    <subcellularLocation>
        <location>Cytoplasm</location>
        <location>Perinuclear region</location>
    </subcellularLocation>
    <subcellularLocation>
        <location>Cell projection</location>
        <location>Podosome</location>
    </subcellularLocation>
    <subcellularLocation>
        <location>Cell membrane</location>
    </subcellularLocation>
    <text evidence="1">Shuttles between the cytoplasm and nucleus. Recruited to the cell membrane following B-cell antigen receptor (BCR) cross-linking in B-cells. Enhanced focal adhesion kinase activity (PTK2/FAK) attenuates its nuclear accumulation and limits its ability to enhance serum response factor (SRF)-dependent gene transcription. Targeting to focal adhesions is essential for its tyrosine phosphorylation in response to bombesin (By similarity).</text>
</comment>
<comment type="tissue specificity">
    <text evidence="5 8">Expressed in osteoclasts (at protein level). Highly expressed in vascular smooth muscle.</text>
</comment>
<comment type="domain">
    <text evidence="9">The LIM domain 3 is critical for focal adhesion targeting and the suppression of paxillin (PXN) tyrosine phosphorylation. The LIM domain 3 alone or both LIM domains 3 and 4 can mediate interaction with AR.</text>
</comment>
<comment type="PTM">
    <text evidence="1">Phosphorylated on tyrosine residues. Phosphorylation on Tyr-72 is important for its inhibitory function. Bombesin stimulates phosphorylation on Tyr-22, Tyr-62 and Tyr-72 (By similarity).</text>
</comment>
<comment type="similarity">
    <text evidence="10">Belongs to the paxillin family.</text>
</comment>
<sequence>MEELDALLEELERCTFQDSEEYSNPVSCHLDQQSTEESKIPQTPKTLSSQGNTSPLKVQLVYATNIQEPNVYSEVQEPKESVLPPKTSAAAQLDELMAHLSEMQAKVSVKADTSRKPLPDQQDHKASLDSMLGDLEQELQDLGIATVPKGYCASCQKPIAGKVIHALGQSWHPEHFVCTHCKEELGSSPFFERSGLAYCSKDYHRLFSPRCAYCAAPITDKVLTAMNKTWHPEHFFCSHCGEVFGAEGFHEKDKKPYCRKDFLAMFSPKCGGCNRPVLENYLSAMNTVWHPECFVCGDCFSSFSSGSFFELDGRPFCELHYHHRRGTLCHDCGQPITGRCISAMGHKFHPEHFVCAFCLTQLPKGIFKEQNNKTYCEKCFTKLFSQ</sequence>
<gene>
    <name type="primary">Lpxn</name>
</gene>
<name>LPXN_MOUSE</name>
<dbReference type="EMBL" id="AB053936">
    <property type="protein sequence ID" value="BAB40667.2"/>
    <property type="molecule type" value="mRNA"/>
</dbReference>
<dbReference type="EMBL" id="AB071194">
    <property type="protein sequence ID" value="BAC22615.1"/>
    <property type="molecule type" value="mRNA"/>
</dbReference>
<dbReference type="CCDS" id="CCDS29638.1"/>
<dbReference type="RefSeq" id="NP_598913.1">
    <property type="nucleotide sequence ID" value="NM_134152.4"/>
</dbReference>
<dbReference type="SMR" id="Q99N69"/>
<dbReference type="BioGRID" id="223241">
    <property type="interactions" value="53"/>
</dbReference>
<dbReference type="FunCoup" id="Q99N69">
    <property type="interactions" value="259"/>
</dbReference>
<dbReference type="IntAct" id="Q99N69">
    <property type="interactions" value="2"/>
</dbReference>
<dbReference type="STRING" id="10090.ENSMUSP00000025601"/>
<dbReference type="iPTMnet" id="Q99N69"/>
<dbReference type="PhosphoSitePlus" id="Q99N69"/>
<dbReference type="jPOST" id="Q99N69"/>
<dbReference type="PaxDb" id="10090-ENSMUSP00000025601"/>
<dbReference type="PeptideAtlas" id="Q99N69"/>
<dbReference type="ProteomicsDB" id="252662"/>
<dbReference type="Antibodypedia" id="27661">
    <property type="antibodies" value="173 antibodies from 24 providers"/>
</dbReference>
<dbReference type="DNASU" id="107321"/>
<dbReference type="Ensembl" id="ENSMUST00000025601.8">
    <property type="protein sequence ID" value="ENSMUSP00000025601.7"/>
    <property type="gene ID" value="ENSMUSG00000024696.10"/>
</dbReference>
<dbReference type="GeneID" id="107321"/>
<dbReference type="KEGG" id="mmu:107321"/>
<dbReference type="UCSC" id="uc008guq.1">
    <property type="organism name" value="mouse"/>
</dbReference>
<dbReference type="AGR" id="MGI:2147677"/>
<dbReference type="CTD" id="9404"/>
<dbReference type="MGI" id="MGI:2147677">
    <property type="gene designation" value="Lpxn"/>
</dbReference>
<dbReference type="VEuPathDB" id="HostDB:ENSMUSG00000024696"/>
<dbReference type="eggNOG" id="KOG1703">
    <property type="taxonomic scope" value="Eukaryota"/>
</dbReference>
<dbReference type="GeneTree" id="ENSGT00940000160259"/>
<dbReference type="HOGENOM" id="CLU_001357_1_1_1"/>
<dbReference type="InParanoid" id="Q99N69"/>
<dbReference type="OMA" id="YCQPCFT"/>
<dbReference type="OrthoDB" id="15567at2759"/>
<dbReference type="PhylomeDB" id="Q99N69"/>
<dbReference type="TreeFam" id="TF314113"/>
<dbReference type="BioGRID-ORCS" id="107321">
    <property type="hits" value="0 hits in 77 CRISPR screens"/>
</dbReference>
<dbReference type="ChiTaRS" id="Lpxn">
    <property type="organism name" value="mouse"/>
</dbReference>
<dbReference type="PRO" id="PR:Q99N69"/>
<dbReference type="Proteomes" id="UP000000589">
    <property type="component" value="Chromosome 19"/>
</dbReference>
<dbReference type="RNAct" id="Q99N69">
    <property type="molecule type" value="protein"/>
</dbReference>
<dbReference type="Bgee" id="ENSMUSG00000024696">
    <property type="expression patterns" value="Expressed in mesenteric lymph node and 84 other cell types or tissues"/>
</dbReference>
<dbReference type="ExpressionAtlas" id="Q99N69">
    <property type="expression patterns" value="baseline and differential"/>
</dbReference>
<dbReference type="GO" id="GO:0042995">
    <property type="term" value="C:cell projection"/>
    <property type="evidence" value="ECO:0007669"/>
    <property type="project" value="UniProtKB-KW"/>
</dbReference>
<dbReference type="GO" id="GO:0005829">
    <property type="term" value="C:cytosol"/>
    <property type="evidence" value="ECO:0007669"/>
    <property type="project" value="Ensembl"/>
</dbReference>
<dbReference type="GO" id="GO:0005925">
    <property type="term" value="C:focal adhesion"/>
    <property type="evidence" value="ECO:0000314"/>
    <property type="project" value="UniProtKB"/>
</dbReference>
<dbReference type="GO" id="GO:0016607">
    <property type="term" value="C:nuclear speck"/>
    <property type="evidence" value="ECO:0007669"/>
    <property type="project" value="Ensembl"/>
</dbReference>
<dbReference type="GO" id="GO:0005634">
    <property type="term" value="C:nucleus"/>
    <property type="evidence" value="ECO:0000314"/>
    <property type="project" value="UniProtKB"/>
</dbReference>
<dbReference type="GO" id="GO:0048471">
    <property type="term" value="C:perinuclear region of cytoplasm"/>
    <property type="evidence" value="ECO:0007669"/>
    <property type="project" value="UniProtKB-SubCell"/>
</dbReference>
<dbReference type="GO" id="GO:0005886">
    <property type="term" value="C:plasma membrane"/>
    <property type="evidence" value="ECO:0007669"/>
    <property type="project" value="UniProtKB-SubCell"/>
</dbReference>
<dbReference type="GO" id="GO:0002102">
    <property type="term" value="C:podosome"/>
    <property type="evidence" value="ECO:0000314"/>
    <property type="project" value="UniProtKB"/>
</dbReference>
<dbReference type="GO" id="GO:0046872">
    <property type="term" value="F:metal ion binding"/>
    <property type="evidence" value="ECO:0007669"/>
    <property type="project" value="UniProtKB-KW"/>
</dbReference>
<dbReference type="GO" id="GO:0003712">
    <property type="term" value="F:transcription coregulator activity"/>
    <property type="evidence" value="ECO:0000314"/>
    <property type="project" value="UniProtKB"/>
</dbReference>
<dbReference type="GO" id="GO:0007155">
    <property type="term" value="P:cell adhesion"/>
    <property type="evidence" value="ECO:0007669"/>
    <property type="project" value="UniProtKB-KW"/>
</dbReference>
<dbReference type="GO" id="GO:0050859">
    <property type="term" value="P:negative regulation of B cell receptor signaling pathway"/>
    <property type="evidence" value="ECO:0000314"/>
    <property type="project" value="UniProtKB"/>
</dbReference>
<dbReference type="GO" id="GO:0007162">
    <property type="term" value="P:negative regulation of cell adhesion"/>
    <property type="evidence" value="ECO:0007669"/>
    <property type="project" value="Ensembl"/>
</dbReference>
<dbReference type="GO" id="GO:0033628">
    <property type="term" value="P:regulation of cell adhesion mediated by integrin"/>
    <property type="evidence" value="ECO:0000315"/>
    <property type="project" value="UniProtKB"/>
</dbReference>
<dbReference type="CDD" id="cd09339">
    <property type="entry name" value="LIM4_Paxillin_like"/>
    <property type="match status" value="1"/>
</dbReference>
<dbReference type="FunFam" id="2.10.110.10:FF:000008">
    <property type="entry name" value="Paxillin isoform 1"/>
    <property type="match status" value="1"/>
</dbReference>
<dbReference type="FunFam" id="2.10.110.10:FF:000009">
    <property type="entry name" value="Paxillin isoform 1"/>
    <property type="match status" value="1"/>
</dbReference>
<dbReference type="FunFam" id="2.10.110.10:FF:000012">
    <property type="entry name" value="Paxillin isoform 1"/>
    <property type="match status" value="1"/>
</dbReference>
<dbReference type="FunFam" id="2.10.110.10:FF:000018">
    <property type="entry name" value="Paxillin isoform 1"/>
    <property type="match status" value="1"/>
</dbReference>
<dbReference type="Gene3D" id="2.10.110.10">
    <property type="entry name" value="Cysteine Rich Protein"/>
    <property type="match status" value="4"/>
</dbReference>
<dbReference type="InterPro" id="IPR017305">
    <property type="entry name" value="Tgfb1i1/Leupaxin/TGFB1I1"/>
</dbReference>
<dbReference type="InterPro" id="IPR001781">
    <property type="entry name" value="Znf_LIM"/>
</dbReference>
<dbReference type="PANTHER" id="PTHR24216:SF23">
    <property type="entry name" value="LEUPAXIN"/>
    <property type="match status" value="1"/>
</dbReference>
<dbReference type="PANTHER" id="PTHR24216">
    <property type="entry name" value="PAXILLIN-RELATED"/>
    <property type="match status" value="1"/>
</dbReference>
<dbReference type="Pfam" id="PF00412">
    <property type="entry name" value="LIM"/>
    <property type="match status" value="4"/>
</dbReference>
<dbReference type="PIRSF" id="PIRSF037881">
    <property type="entry name" value="Leupaxin"/>
    <property type="match status" value="1"/>
</dbReference>
<dbReference type="SMART" id="SM00132">
    <property type="entry name" value="LIM"/>
    <property type="match status" value="4"/>
</dbReference>
<dbReference type="SUPFAM" id="SSF57716">
    <property type="entry name" value="Glucocorticoid receptor-like (DNA-binding domain)"/>
    <property type="match status" value="5"/>
</dbReference>
<dbReference type="PROSITE" id="PS00478">
    <property type="entry name" value="LIM_DOMAIN_1"/>
    <property type="match status" value="4"/>
</dbReference>
<dbReference type="PROSITE" id="PS50023">
    <property type="entry name" value="LIM_DOMAIN_2"/>
    <property type="match status" value="4"/>
</dbReference>
<proteinExistence type="evidence at protein level"/>